<sequence>MLKGIILIVTIQLVNANFFGVFGKPLYNPFNKDKYMIDFITTFNKLMNMKQPQFPHPKSYPGFPPLFPGIKGKKSVFKTIDFTDMAPGSKKTFRVDNGQGIAFRSKSGNAGGMSFSSGTGGGKGFAFGGTLGGGSNGEFVMSQSGPGLKGGKVTYSKGVPKFAKGLFGMLPFFK</sequence>
<evidence type="ECO:0000255" key="1"/>
<evidence type="ECO:0000269" key="2">
    <source>
    </source>
</evidence>
<evidence type="ECO:0000303" key="3">
    <source>
    </source>
</evidence>
<evidence type="ECO:0000305" key="4"/>
<accession>P86859</accession>
<name>MYT3_MYTCA</name>
<protein>
    <recommendedName>
        <fullName evidence="3">Mytilin-3</fullName>
    </recommendedName>
    <alternativeName>
        <fullName evidence="3">Mytilus uncharacterized protein 3</fullName>
        <shortName evidence="3">MUSP-3</shortName>
    </alternativeName>
</protein>
<comment type="subcellular location">
    <subcellularLocation>
        <location evidence="2">Secreted</location>
    </subcellularLocation>
</comment>
<comment type="tissue specificity">
    <text evidence="2">Component of the organic matrix of calcified shell layers like nacre and prisms.</text>
</comment>
<reference evidence="4" key="1">
    <citation type="submission" date="2008-12" db="EMBL/GenBank/DDBJ databases">
        <title>Expressed sequence tags from Mytilus californianus.</title>
        <authorList>
            <person name="Gracey A."/>
            <person name="Grimwood J."/>
            <person name="Schmutz J."/>
            <person name="Myers R.M."/>
        </authorList>
    </citation>
    <scope>NUCLEOTIDE SEQUENCE [MRNA]</scope>
</reference>
<reference evidence="4" key="2">
    <citation type="journal article" date="2011" name="J. Mol. Evol.">
        <title>Molecular evolution of mollusc shell proteins: insights from proteomic analysis of the edible mussel mytilus.</title>
        <authorList>
            <person name="Marie B."/>
            <person name="Le Roy N."/>
            <person name="Zanella-Cleon I."/>
            <person name="Becchi M."/>
            <person name="Marin F."/>
        </authorList>
    </citation>
    <scope>PROTEIN SEQUENCE OF 79-90 AND 95-104</scope>
    <scope>SUBCELLULAR LOCATION</scope>
    <scope>TISSUE SPECIFICITY</scope>
    <source>
        <tissue evidence="2">Shell</tissue>
    </source>
</reference>
<proteinExistence type="evidence at protein level"/>
<dbReference type="EMBL" id="GE749275">
    <property type="status" value="NOT_ANNOTATED_CDS"/>
    <property type="molecule type" value="mRNA"/>
</dbReference>
<dbReference type="RefSeq" id="XP_052102364.1">
    <property type="nucleotide sequence ID" value="XM_052246404.1"/>
</dbReference>
<dbReference type="EnsemblMetazoa" id="XM_052246404.1">
    <property type="protein sequence ID" value="XP_052102364.1"/>
    <property type="gene ID" value="LOC127735950"/>
</dbReference>
<dbReference type="GeneID" id="127735950"/>
<dbReference type="OrthoDB" id="6144204at2759"/>
<dbReference type="GO" id="GO:0005576">
    <property type="term" value="C:extracellular region"/>
    <property type="evidence" value="ECO:0007669"/>
    <property type="project" value="UniProtKB-SubCell"/>
</dbReference>
<feature type="signal peptide" evidence="1">
    <location>
        <begin position="1"/>
        <end position="16"/>
    </location>
</feature>
<feature type="chain" id="PRO_0000404091" description="Mytilin-3" evidence="1">
    <location>
        <begin position="17"/>
        <end position="174"/>
    </location>
</feature>
<organism>
    <name type="scientific">Mytilus californianus</name>
    <name type="common">California mussel</name>
    <dbReference type="NCBI Taxonomy" id="6549"/>
    <lineage>
        <taxon>Eukaryota</taxon>
        <taxon>Metazoa</taxon>
        <taxon>Spiralia</taxon>
        <taxon>Lophotrochozoa</taxon>
        <taxon>Mollusca</taxon>
        <taxon>Bivalvia</taxon>
        <taxon>Autobranchia</taxon>
        <taxon>Pteriomorphia</taxon>
        <taxon>Mytilida</taxon>
        <taxon>Mytiloidea</taxon>
        <taxon>Mytilidae</taxon>
        <taxon>Mytilinae</taxon>
        <taxon>Mytilus</taxon>
    </lineage>
</organism>
<keyword id="KW-0903">Direct protein sequencing</keyword>
<keyword id="KW-0964">Secreted</keyword>
<keyword id="KW-0732">Signal</keyword>